<evidence type="ECO:0000255" key="1"/>
<evidence type="ECO:0000256" key="2">
    <source>
        <dbReference type="SAM" id="MobiDB-lite"/>
    </source>
</evidence>
<evidence type="ECO:0000305" key="3"/>
<comment type="function">
    <text evidence="3">May be a sugar porin with a broad carbohydrate specificity.</text>
</comment>
<comment type="subcellular location">
    <subcellularLocation>
        <location evidence="3">Cell outer membrane</location>
        <topology evidence="3">Multi-pass membrane protein</topology>
    </subcellularLocation>
</comment>
<comment type="similarity">
    <text evidence="3">Belongs to the porin LamB (TC 1.B.3) family.</text>
</comment>
<proteinExistence type="inferred from homology"/>
<dbReference type="EMBL" id="CP000802">
    <property type="protein sequence ID" value="ABV08135.1"/>
    <property type="molecule type" value="Genomic_DNA"/>
</dbReference>
<dbReference type="RefSeq" id="WP_000489881.1">
    <property type="nucleotide sequence ID" value="NC_009800.1"/>
</dbReference>
<dbReference type="SMR" id="A8A6I1"/>
<dbReference type="KEGG" id="ecx:EcHS_A3934"/>
<dbReference type="HOGENOM" id="CLU_032473_2_1_6"/>
<dbReference type="GO" id="GO:0009279">
    <property type="term" value="C:cell outer membrane"/>
    <property type="evidence" value="ECO:0007669"/>
    <property type="project" value="UniProtKB-SubCell"/>
</dbReference>
<dbReference type="GO" id="GO:0046930">
    <property type="term" value="C:pore complex"/>
    <property type="evidence" value="ECO:0007669"/>
    <property type="project" value="UniProtKB-KW"/>
</dbReference>
<dbReference type="GO" id="GO:0015144">
    <property type="term" value="F:carbohydrate transmembrane transporter activity"/>
    <property type="evidence" value="ECO:0007669"/>
    <property type="project" value="TreeGrafter"/>
</dbReference>
<dbReference type="GO" id="GO:0015288">
    <property type="term" value="F:porin activity"/>
    <property type="evidence" value="ECO:0007669"/>
    <property type="project" value="UniProtKB-KW"/>
</dbReference>
<dbReference type="GO" id="GO:0006811">
    <property type="term" value="P:monoatomic ion transport"/>
    <property type="evidence" value="ECO:0007669"/>
    <property type="project" value="UniProtKB-KW"/>
</dbReference>
<dbReference type="GO" id="GO:0015774">
    <property type="term" value="P:polysaccharide transport"/>
    <property type="evidence" value="ECO:0007669"/>
    <property type="project" value="TreeGrafter"/>
</dbReference>
<dbReference type="CDD" id="cd01346">
    <property type="entry name" value="Maltoporin-like"/>
    <property type="match status" value="1"/>
</dbReference>
<dbReference type="FunFam" id="2.40.170.10:FF:000002">
    <property type="entry name" value="Cryptic outer membrane porin BglH"/>
    <property type="match status" value="1"/>
</dbReference>
<dbReference type="Gene3D" id="2.40.170.10">
    <property type="entry name" value="Porin, LamB type"/>
    <property type="match status" value="1"/>
</dbReference>
<dbReference type="InterPro" id="IPR050286">
    <property type="entry name" value="G_neg_Bact_CarbUptk_Porin"/>
</dbReference>
<dbReference type="InterPro" id="IPR021570">
    <property type="entry name" value="LamB-type_porin_N_dom"/>
</dbReference>
<dbReference type="InterPro" id="IPR003192">
    <property type="entry name" value="Porin_LamB"/>
</dbReference>
<dbReference type="InterPro" id="IPR036998">
    <property type="entry name" value="Porin_LamB_sf"/>
</dbReference>
<dbReference type="PANTHER" id="PTHR38762">
    <property type="entry name" value="CRYPTIC OUTER MEMBRANE PORIN BGLH-RELATED"/>
    <property type="match status" value="1"/>
</dbReference>
<dbReference type="PANTHER" id="PTHR38762:SF1">
    <property type="entry name" value="CRYPTIC OUTER MEMBRANE PORIN BGLH-RELATED"/>
    <property type="match status" value="1"/>
</dbReference>
<dbReference type="Pfam" id="PF02264">
    <property type="entry name" value="LamB"/>
    <property type="match status" value="1"/>
</dbReference>
<dbReference type="Pfam" id="PF11471">
    <property type="entry name" value="Sugarporin_N"/>
    <property type="match status" value="1"/>
</dbReference>
<dbReference type="SUPFAM" id="SSF56935">
    <property type="entry name" value="Porins"/>
    <property type="match status" value="1"/>
</dbReference>
<accession>A8A6I1</accession>
<gene>
    <name type="primary">bglH</name>
    <name type="ordered locus">EcHS_A3934</name>
</gene>
<feature type="signal peptide" evidence="1">
    <location>
        <begin position="1"/>
        <end position="25"/>
    </location>
</feature>
<feature type="chain" id="PRO_0000355024" description="Putative outer membrane porin BglH">
    <location>
        <begin position="26"/>
        <end position="538"/>
    </location>
</feature>
<feature type="region of interest" description="Disordered" evidence="2">
    <location>
        <begin position="52"/>
        <end position="82"/>
    </location>
</feature>
<feature type="compositionally biased region" description="Polar residues" evidence="2">
    <location>
        <begin position="62"/>
        <end position="73"/>
    </location>
</feature>
<name>BGLH_ECOHS</name>
<organism>
    <name type="scientific">Escherichia coli O9:H4 (strain HS)</name>
    <dbReference type="NCBI Taxonomy" id="331112"/>
    <lineage>
        <taxon>Bacteria</taxon>
        <taxon>Pseudomonadati</taxon>
        <taxon>Pseudomonadota</taxon>
        <taxon>Gammaproteobacteria</taxon>
        <taxon>Enterobacterales</taxon>
        <taxon>Enterobacteriaceae</taxon>
        <taxon>Escherichia</taxon>
    </lineage>
</organism>
<protein>
    <recommendedName>
        <fullName>Putative outer membrane porin BglH</fullName>
    </recommendedName>
</protein>
<sequence>MFRRNLITSAILLMAPLAFSAQSLAESLTVEQRLELLEKALRETQSELKKYKDEEKKKYTPATVNRSVSTNDQGYAANPFPTSSAAKPDAVLVKNEEKNASETGSIYSSMTLKDFSKFVKDEIGFSYNGYYRSGWGTASHGSPKSWAIGSLGRFGNEYSGWFDLQLKQRVYNENGKRVDAVVMMDGNVGQQYSTGWFGDNAGGENYMQFSDMYVTTKGFLPFAPEADFWVGKHGAPKIEIQMLDWKTQRTDAAAGVGLENWKVGPGKIDIALVREDVDDYDRSLQNKQQINTNTIDLRYKDIPLWDKATLMVSGRYVTANESASEKDNQDNNGYYDWKDTWMFGTSLTQKFDKGGFNEFSFLVANNSIASNFGRYAGASPFTTFNGRYYGDHTGGTAVRLTSQGEAYIGDHFIVANAIVYSFGNDIYSYETGAHSDFESIRAVVRPAYIWDQYNQTGVELGYFTQQNKDANSNKFNESGYKTTLFHTFKVNTSMLTSRPEIRFYATYIKALENELDGFTFEDNKDDQFAVGAQAEIWW</sequence>
<keyword id="KW-0998">Cell outer membrane</keyword>
<keyword id="KW-0406">Ion transport</keyword>
<keyword id="KW-0472">Membrane</keyword>
<keyword id="KW-0626">Porin</keyword>
<keyword id="KW-0732">Signal</keyword>
<keyword id="KW-0812">Transmembrane</keyword>
<keyword id="KW-1134">Transmembrane beta strand</keyword>
<keyword id="KW-0813">Transport</keyword>
<reference key="1">
    <citation type="journal article" date="2008" name="J. Bacteriol.">
        <title>The pangenome structure of Escherichia coli: comparative genomic analysis of E. coli commensal and pathogenic isolates.</title>
        <authorList>
            <person name="Rasko D.A."/>
            <person name="Rosovitz M.J."/>
            <person name="Myers G.S.A."/>
            <person name="Mongodin E.F."/>
            <person name="Fricke W.F."/>
            <person name="Gajer P."/>
            <person name="Crabtree J."/>
            <person name="Sebaihia M."/>
            <person name="Thomson N.R."/>
            <person name="Chaudhuri R."/>
            <person name="Henderson I.R."/>
            <person name="Sperandio V."/>
            <person name="Ravel J."/>
        </authorList>
    </citation>
    <scope>NUCLEOTIDE SEQUENCE [LARGE SCALE GENOMIC DNA]</scope>
    <source>
        <strain>HS</strain>
    </source>
</reference>